<protein>
    <recommendedName>
        <fullName>Probable serine carboxypeptidase CPVL</fullName>
        <ecNumber>3.4.16.-</ecNumber>
    </recommendedName>
    <alternativeName>
        <fullName>Carboxypeptidase, vitellogenic-like</fullName>
    </alternativeName>
    <alternativeName>
        <fullName>Vitellogenic carboxypeptidase-like protein</fullName>
        <shortName>VCP-like protein</shortName>
        <shortName>hVLP</shortName>
    </alternativeName>
</protein>
<accession>Q9H3G5</accession>
<accession>A4D1A4</accession>
<accession>Q6UX20</accession>
<accession>Q8NBL7</accession>
<accession>Q96AR7</accession>
<accession>Q9HB41</accession>
<reference key="1">
    <citation type="journal article" date="2001" name="Genomics">
        <title>Cloning and characterization of CPVL, a novel serine carboxypeptidase, from human macrophages.</title>
        <authorList>
            <person name="Mahoney J.A."/>
            <person name="Ntolosi B."/>
            <person name="DaSilva R.P."/>
            <person name="Gordon S."/>
            <person name="McKnight A.J."/>
        </authorList>
    </citation>
    <scope>NUCLEOTIDE SEQUENCE [MRNA]</scope>
    <scope>VARIANT HIS-398</scope>
</reference>
<reference key="2">
    <citation type="submission" date="2000-06" db="EMBL/GenBank/DDBJ databases">
        <title>Cloning of VCP-like protein expressed in human heart and placenta.</title>
        <authorList>
            <person name="Cho J.-J."/>
            <person name="Baik H.-H."/>
        </authorList>
    </citation>
    <scope>NUCLEOTIDE SEQUENCE [MRNA]</scope>
    <scope>VARIANTS HIS-25 AND HIS-398</scope>
</reference>
<reference key="3">
    <citation type="journal article" date="2003" name="Genome Res.">
        <title>The secreted protein discovery initiative (SPDI), a large-scale effort to identify novel human secreted and transmembrane proteins: a bioinformatics assessment.</title>
        <authorList>
            <person name="Clark H.F."/>
            <person name="Gurney A.L."/>
            <person name="Abaya E."/>
            <person name="Baker K."/>
            <person name="Baldwin D.T."/>
            <person name="Brush J."/>
            <person name="Chen J."/>
            <person name="Chow B."/>
            <person name="Chui C."/>
            <person name="Crowley C."/>
            <person name="Currell B."/>
            <person name="Deuel B."/>
            <person name="Dowd P."/>
            <person name="Eaton D."/>
            <person name="Foster J.S."/>
            <person name="Grimaldi C."/>
            <person name="Gu Q."/>
            <person name="Hass P.E."/>
            <person name="Heldens S."/>
            <person name="Huang A."/>
            <person name="Kim H.S."/>
            <person name="Klimowski L."/>
            <person name="Jin Y."/>
            <person name="Johnson S."/>
            <person name="Lee J."/>
            <person name="Lewis L."/>
            <person name="Liao D."/>
            <person name="Mark M.R."/>
            <person name="Robbie E."/>
            <person name="Sanchez C."/>
            <person name="Schoenfeld J."/>
            <person name="Seshagiri S."/>
            <person name="Simmons L."/>
            <person name="Singh J."/>
            <person name="Smith V."/>
            <person name="Stinson J."/>
            <person name="Vagts A."/>
            <person name="Vandlen R.L."/>
            <person name="Watanabe C."/>
            <person name="Wieand D."/>
            <person name="Woods K."/>
            <person name="Xie M.-H."/>
            <person name="Yansura D.G."/>
            <person name="Yi S."/>
            <person name="Yu G."/>
            <person name="Yuan J."/>
            <person name="Zhang M."/>
            <person name="Zhang Z."/>
            <person name="Goddard A.D."/>
            <person name="Wood W.I."/>
            <person name="Godowski P.J."/>
            <person name="Gray A.M."/>
        </authorList>
    </citation>
    <scope>NUCLEOTIDE SEQUENCE [LARGE SCALE MRNA]</scope>
</reference>
<reference key="4">
    <citation type="journal article" date="2005" name="DNA Res.">
        <title>Signal sequence and keyword trap in silico for selection of full-length human cDNAs encoding secretion or membrane proteins from oligo-capped cDNA libraries.</title>
        <authorList>
            <person name="Otsuki T."/>
            <person name="Ota T."/>
            <person name="Nishikawa T."/>
            <person name="Hayashi K."/>
            <person name="Suzuki Y."/>
            <person name="Yamamoto J."/>
            <person name="Wakamatsu A."/>
            <person name="Kimura K."/>
            <person name="Sakamoto K."/>
            <person name="Hatano N."/>
            <person name="Kawai Y."/>
            <person name="Ishii S."/>
            <person name="Saito K."/>
            <person name="Kojima S."/>
            <person name="Sugiyama T."/>
            <person name="Ono T."/>
            <person name="Okano K."/>
            <person name="Yoshikawa Y."/>
            <person name="Aotsuka S."/>
            <person name="Sasaki N."/>
            <person name="Hattori A."/>
            <person name="Okumura K."/>
            <person name="Nagai K."/>
            <person name="Sugano S."/>
            <person name="Isogai T."/>
        </authorList>
    </citation>
    <scope>NUCLEOTIDE SEQUENCE [LARGE SCALE MRNA]</scope>
    <scope>VARIANT VAL-435</scope>
    <source>
        <tissue>Placenta</tissue>
    </source>
</reference>
<reference key="5">
    <citation type="journal article" date="2003" name="Science">
        <title>Human chromosome 7: DNA sequence and biology.</title>
        <authorList>
            <person name="Scherer S.W."/>
            <person name="Cheung J."/>
            <person name="MacDonald J.R."/>
            <person name="Osborne L.R."/>
            <person name="Nakabayashi K."/>
            <person name="Herbrick J.-A."/>
            <person name="Carson A.R."/>
            <person name="Parker-Katiraee L."/>
            <person name="Skaug J."/>
            <person name="Khaja R."/>
            <person name="Zhang J."/>
            <person name="Hudek A.K."/>
            <person name="Li M."/>
            <person name="Haddad M."/>
            <person name="Duggan G.E."/>
            <person name="Fernandez B.A."/>
            <person name="Kanematsu E."/>
            <person name="Gentles S."/>
            <person name="Christopoulos C.C."/>
            <person name="Choufani S."/>
            <person name="Kwasnicka D."/>
            <person name="Zheng X.H."/>
            <person name="Lai Z."/>
            <person name="Nusskern D.R."/>
            <person name="Zhang Q."/>
            <person name="Gu Z."/>
            <person name="Lu F."/>
            <person name="Zeesman S."/>
            <person name="Nowaczyk M.J."/>
            <person name="Teshima I."/>
            <person name="Chitayat D."/>
            <person name="Shuman C."/>
            <person name="Weksberg R."/>
            <person name="Zackai E.H."/>
            <person name="Grebe T.A."/>
            <person name="Cox S.R."/>
            <person name="Kirkpatrick S.J."/>
            <person name="Rahman N."/>
            <person name="Friedman J.M."/>
            <person name="Heng H.H.Q."/>
            <person name="Pelicci P.G."/>
            <person name="Lo-Coco F."/>
            <person name="Belloni E."/>
            <person name="Shaffer L.G."/>
            <person name="Pober B."/>
            <person name="Morton C.C."/>
            <person name="Gusella J.F."/>
            <person name="Bruns G.A.P."/>
            <person name="Korf B.R."/>
            <person name="Quade B.J."/>
            <person name="Ligon A.H."/>
            <person name="Ferguson H."/>
            <person name="Higgins A.W."/>
            <person name="Leach N.T."/>
            <person name="Herrick S.R."/>
            <person name="Lemyre E."/>
            <person name="Farra C.G."/>
            <person name="Kim H.-G."/>
            <person name="Summers A.M."/>
            <person name="Gripp K.W."/>
            <person name="Roberts W."/>
            <person name="Szatmari P."/>
            <person name="Winsor E.J.T."/>
            <person name="Grzeschik K.-H."/>
            <person name="Teebi A."/>
            <person name="Minassian B.A."/>
            <person name="Kere J."/>
            <person name="Armengol L."/>
            <person name="Pujana M.A."/>
            <person name="Estivill X."/>
            <person name="Wilson M.D."/>
            <person name="Koop B.F."/>
            <person name="Tosi S."/>
            <person name="Moore G.E."/>
            <person name="Boright A.P."/>
            <person name="Zlotorynski E."/>
            <person name="Kerem B."/>
            <person name="Kroisel P.M."/>
            <person name="Petek E."/>
            <person name="Oscier D.G."/>
            <person name="Mould S.J."/>
            <person name="Doehner H."/>
            <person name="Doehner K."/>
            <person name="Rommens J.M."/>
            <person name="Vincent J.B."/>
            <person name="Venter J.C."/>
            <person name="Li P.W."/>
            <person name="Mural R.J."/>
            <person name="Adams M.D."/>
            <person name="Tsui L.-C."/>
        </authorList>
    </citation>
    <scope>NUCLEOTIDE SEQUENCE [LARGE SCALE GENOMIC DNA]</scope>
</reference>
<reference key="6">
    <citation type="submission" date="2005-07" db="EMBL/GenBank/DDBJ databases">
        <authorList>
            <person name="Mural R.J."/>
            <person name="Istrail S."/>
            <person name="Sutton G.G."/>
            <person name="Florea L."/>
            <person name="Halpern A.L."/>
            <person name="Mobarry C.M."/>
            <person name="Lippert R."/>
            <person name="Walenz B."/>
            <person name="Shatkay H."/>
            <person name="Dew I."/>
            <person name="Miller J.R."/>
            <person name="Flanigan M.J."/>
            <person name="Edwards N.J."/>
            <person name="Bolanos R."/>
            <person name="Fasulo D."/>
            <person name="Halldorsson B.V."/>
            <person name="Hannenhalli S."/>
            <person name="Turner R."/>
            <person name="Yooseph S."/>
            <person name="Lu F."/>
            <person name="Nusskern D.R."/>
            <person name="Shue B.C."/>
            <person name="Zheng X.H."/>
            <person name="Zhong F."/>
            <person name="Delcher A.L."/>
            <person name="Huson D.H."/>
            <person name="Kravitz S.A."/>
            <person name="Mouchard L."/>
            <person name="Reinert K."/>
            <person name="Remington K.A."/>
            <person name="Clark A.G."/>
            <person name="Waterman M.S."/>
            <person name="Eichler E.E."/>
            <person name="Adams M.D."/>
            <person name="Hunkapiller M.W."/>
            <person name="Myers E.W."/>
            <person name="Venter J.C."/>
        </authorList>
    </citation>
    <scope>NUCLEOTIDE SEQUENCE [LARGE SCALE GENOMIC DNA]</scope>
</reference>
<reference key="7">
    <citation type="journal article" date="2004" name="Genome Res.">
        <title>The status, quality, and expansion of the NIH full-length cDNA project: the Mammalian Gene Collection (MGC).</title>
        <authorList>
            <consortium name="The MGC Project Team"/>
        </authorList>
    </citation>
    <scope>NUCLEOTIDE SEQUENCE [LARGE SCALE MRNA]</scope>
    <scope>VARIANT VAL-435</scope>
    <source>
        <tissue>Lung</tissue>
    </source>
</reference>
<reference key="8">
    <citation type="journal article" date="2009" name="J. Proteome Res.">
        <title>Glycoproteomics analysis of human liver tissue by combination of multiple enzyme digestion and hydrazide chemistry.</title>
        <authorList>
            <person name="Chen R."/>
            <person name="Jiang X."/>
            <person name="Sun D."/>
            <person name="Han G."/>
            <person name="Wang F."/>
            <person name="Ye M."/>
            <person name="Wang L."/>
            <person name="Zou H."/>
        </authorList>
    </citation>
    <scope>GLYCOSYLATION [LARGE SCALE ANALYSIS] AT ASN-81; ASN-132 AND ASN-346</scope>
    <source>
        <tissue>Liver</tissue>
    </source>
</reference>
<reference key="9">
    <citation type="journal article" date="2011" name="BMC Syst. Biol.">
        <title>Initial characterization of the human central proteome.</title>
        <authorList>
            <person name="Burkard T.R."/>
            <person name="Planyavsky M."/>
            <person name="Kaupe I."/>
            <person name="Breitwieser F.P."/>
            <person name="Buerckstuemmer T."/>
            <person name="Bennett K.L."/>
            <person name="Superti-Furga G."/>
            <person name="Colinge J."/>
        </authorList>
    </citation>
    <scope>IDENTIFICATION BY MASS SPECTROMETRY [LARGE SCALE ANALYSIS]</scope>
</reference>
<reference key="10">
    <citation type="journal article" date="2014" name="J. Proteomics">
        <title>An enzyme assisted RP-RPLC approach for in-depth analysis of human liver phosphoproteome.</title>
        <authorList>
            <person name="Bian Y."/>
            <person name="Song C."/>
            <person name="Cheng K."/>
            <person name="Dong M."/>
            <person name="Wang F."/>
            <person name="Huang J."/>
            <person name="Sun D."/>
            <person name="Wang L."/>
            <person name="Ye M."/>
            <person name="Zou H."/>
        </authorList>
    </citation>
    <scope>IDENTIFICATION BY MASS SPECTROMETRY [LARGE SCALE ANALYSIS]</scope>
    <source>
        <tissue>Liver</tissue>
    </source>
</reference>
<reference key="11">
    <citation type="journal article" date="2015" name="Proteomics">
        <title>N-terminome analysis of the human mitochondrial proteome.</title>
        <authorList>
            <person name="Vaca Jacome A.S."/>
            <person name="Rabilloud T."/>
            <person name="Schaeffer-Reiss C."/>
            <person name="Rompais M."/>
            <person name="Ayoub D."/>
            <person name="Lane L."/>
            <person name="Bairoch A."/>
            <person name="Van Dorsselaer A."/>
            <person name="Carapito C."/>
        </authorList>
    </citation>
    <scope>IDENTIFICATION BY MASS SPECTROMETRY [LARGE SCALE ANALYSIS]</scope>
</reference>
<comment type="function">
    <text>May be involved in the digestion of phagocytosed particles in the lysosome, participation in an inflammatory protease cascade, and trimming of peptides for antigen presentation.</text>
</comment>
<comment type="tissue specificity">
    <text>Expressed in macrophages but not in other leukocytes. Abundantly expressed in heart and kidney. Also expressed in spleen, leukocytes, and placenta.</text>
</comment>
<comment type="similarity">
    <text evidence="8">Belongs to the peptidase S10 family.</text>
</comment>
<organism>
    <name type="scientific">Homo sapiens</name>
    <name type="common">Human</name>
    <dbReference type="NCBI Taxonomy" id="9606"/>
    <lineage>
        <taxon>Eukaryota</taxon>
        <taxon>Metazoa</taxon>
        <taxon>Chordata</taxon>
        <taxon>Craniata</taxon>
        <taxon>Vertebrata</taxon>
        <taxon>Euteleostomi</taxon>
        <taxon>Mammalia</taxon>
        <taxon>Eutheria</taxon>
        <taxon>Euarchontoglires</taxon>
        <taxon>Primates</taxon>
        <taxon>Haplorrhini</taxon>
        <taxon>Catarrhini</taxon>
        <taxon>Hominidae</taxon>
        <taxon>Homo</taxon>
    </lineage>
</organism>
<sequence>MVGAMWKVIVSLVLLMPGPCDGLFRSLYRSVSMPPKGDSGQPLFLTPYIEAGKIQKGRELSLVGPFPGLNMKSYAGFLTVNKTYNSNLFFWFFPAQIQPEDAPVVLWLQGGPGGSSMFGLFVEHGPYVVTSNMTLRDRDFPWTTTLSMLYIDNPVGTGFSFTDDTHGYAVNEDDVARDLYSALIQFFQIFPEYKNNDFYVTGESYAGKYVPAIAHLIHSLNPVREVKINLNGIAIGDGYSDPESIIGGYAEFLYQIGLLDEKQKKYFQKQCHECIEHIRKQNWFEAFEILDKLLDGDLTSDPSYFQNVTGCSNYYNFLRCTEPEDQLYYVKFLSLPEVRQAIHVGNQTFNDGTIVEKYLREDTVQSVKPWLTEIMNNYKVLIYNGQLDIIVAAALTERSLMGMDWKGSQEYKKAEKKVWKIFKSDSEVAGYIRQAGDFHQVIIRGGGHILPYDQPLRAFDMINRFIYGKGWDPYVG</sequence>
<name>CPVL_HUMAN</name>
<evidence type="ECO:0000255" key="1"/>
<evidence type="ECO:0000255" key="2">
    <source>
        <dbReference type="PROSITE-ProRule" id="PRU10074"/>
    </source>
</evidence>
<evidence type="ECO:0000269" key="3">
    <source>
    </source>
</evidence>
<evidence type="ECO:0000269" key="4">
    <source>
    </source>
</evidence>
<evidence type="ECO:0000269" key="5">
    <source>
    </source>
</evidence>
<evidence type="ECO:0000269" key="6">
    <source>
    </source>
</evidence>
<evidence type="ECO:0000269" key="7">
    <source ref="2"/>
</evidence>
<evidence type="ECO:0000305" key="8"/>
<keyword id="KW-0121">Carboxypeptidase</keyword>
<keyword id="KW-0325">Glycoprotein</keyword>
<keyword id="KW-0378">Hydrolase</keyword>
<keyword id="KW-0645">Protease</keyword>
<keyword id="KW-1267">Proteomics identification</keyword>
<keyword id="KW-1185">Reference proteome</keyword>
<keyword id="KW-0732">Signal</keyword>
<keyword id="KW-0865">Zymogen</keyword>
<dbReference type="EC" id="3.4.16.-"/>
<dbReference type="EMBL" id="AF106704">
    <property type="protein sequence ID" value="AAG37991.2"/>
    <property type="molecule type" value="mRNA"/>
</dbReference>
<dbReference type="EMBL" id="AF282617">
    <property type="protein sequence ID" value="AAG14348.1"/>
    <property type="molecule type" value="mRNA"/>
</dbReference>
<dbReference type="EMBL" id="AY358549">
    <property type="protein sequence ID" value="AAQ88913.1"/>
    <property type="molecule type" value="mRNA"/>
</dbReference>
<dbReference type="EMBL" id="AK075433">
    <property type="protein sequence ID" value="BAC11618.1"/>
    <property type="molecule type" value="mRNA"/>
</dbReference>
<dbReference type="EMBL" id="CH236948">
    <property type="protein sequence ID" value="EAL24207.1"/>
    <property type="molecule type" value="Genomic_DNA"/>
</dbReference>
<dbReference type="EMBL" id="CH471073">
    <property type="protein sequence ID" value="EAW93914.1"/>
    <property type="molecule type" value="Genomic_DNA"/>
</dbReference>
<dbReference type="EMBL" id="BC016838">
    <property type="protein sequence ID" value="AAH16838.1"/>
    <property type="molecule type" value="mRNA"/>
</dbReference>
<dbReference type="CCDS" id="CCDS5419.1"/>
<dbReference type="RefSeq" id="NP_001334981.1">
    <property type="nucleotide sequence ID" value="NM_001348052.1"/>
</dbReference>
<dbReference type="RefSeq" id="NP_001334983.1">
    <property type="nucleotide sequence ID" value="NM_001348054.1"/>
</dbReference>
<dbReference type="RefSeq" id="NP_001358184.1">
    <property type="nucleotide sequence ID" value="NM_001371255.1"/>
</dbReference>
<dbReference type="RefSeq" id="NP_001358185.1">
    <property type="nucleotide sequence ID" value="NM_001371256.1"/>
</dbReference>
<dbReference type="RefSeq" id="NP_001358186.1">
    <property type="nucleotide sequence ID" value="NM_001371257.1"/>
</dbReference>
<dbReference type="RefSeq" id="NP_001358187.1">
    <property type="nucleotide sequence ID" value="NM_001371258.1"/>
</dbReference>
<dbReference type="RefSeq" id="NP_001358189.1">
    <property type="nucleotide sequence ID" value="NM_001371260.1"/>
</dbReference>
<dbReference type="RefSeq" id="NP_001358190.1">
    <property type="nucleotide sequence ID" value="NM_001371261.1"/>
</dbReference>
<dbReference type="RefSeq" id="NP_001358191.1">
    <property type="nucleotide sequence ID" value="NM_001371262.1"/>
</dbReference>
<dbReference type="RefSeq" id="NP_001358192.1">
    <property type="nucleotide sequence ID" value="NM_001371263.1"/>
</dbReference>
<dbReference type="RefSeq" id="NP_061902.2">
    <property type="nucleotide sequence ID" value="NM_019029.3"/>
</dbReference>
<dbReference type="RefSeq" id="NP_112601.3">
    <property type="nucleotide sequence ID" value="NM_031311.4"/>
</dbReference>
<dbReference type="RefSeq" id="XP_011513739.1">
    <property type="nucleotide sequence ID" value="XM_011515437.2"/>
</dbReference>
<dbReference type="RefSeq" id="XP_047276486.1">
    <property type="nucleotide sequence ID" value="XM_047420530.1"/>
</dbReference>
<dbReference type="SMR" id="Q9H3G5"/>
<dbReference type="BioGRID" id="120000">
    <property type="interactions" value="191"/>
</dbReference>
<dbReference type="FunCoup" id="Q9H3G5">
    <property type="interactions" value="1256"/>
</dbReference>
<dbReference type="IntAct" id="Q9H3G5">
    <property type="interactions" value="120"/>
</dbReference>
<dbReference type="MINT" id="Q9H3G5"/>
<dbReference type="STRING" id="9606.ENSP00000387164"/>
<dbReference type="ESTHER" id="human-CPVL">
    <property type="family name" value="Carboxypeptidase_S10"/>
</dbReference>
<dbReference type="MEROPS" id="S10.003"/>
<dbReference type="GlyConnect" id="1630">
    <property type="glycosylation" value="11 N-Linked glycans (3 sites)"/>
</dbReference>
<dbReference type="GlyCosmos" id="Q9H3G5">
    <property type="glycosylation" value="5 sites, 12 glycans"/>
</dbReference>
<dbReference type="GlyGen" id="Q9H3G5">
    <property type="glycosylation" value="5 sites, 108 N-linked glycans (3 sites), 1 O-linked glycan (1 site)"/>
</dbReference>
<dbReference type="iPTMnet" id="Q9H3G5"/>
<dbReference type="PhosphoSitePlus" id="Q9H3G5"/>
<dbReference type="BioMuta" id="CPVL"/>
<dbReference type="DMDM" id="67476930"/>
<dbReference type="jPOST" id="Q9H3G5"/>
<dbReference type="MassIVE" id="Q9H3G5"/>
<dbReference type="PaxDb" id="9606-ENSP00000387164"/>
<dbReference type="PeptideAtlas" id="Q9H3G5"/>
<dbReference type="ProteomicsDB" id="80708"/>
<dbReference type="Pumba" id="Q9H3G5"/>
<dbReference type="Antibodypedia" id="26062">
    <property type="antibodies" value="190 antibodies from 28 providers"/>
</dbReference>
<dbReference type="DNASU" id="54504"/>
<dbReference type="Ensembl" id="ENST00000265394.10">
    <property type="protein sequence ID" value="ENSP00000265394.5"/>
    <property type="gene ID" value="ENSG00000106066.15"/>
</dbReference>
<dbReference type="Ensembl" id="ENST00000396276.7">
    <property type="protein sequence ID" value="ENSP00000379572.3"/>
    <property type="gene ID" value="ENSG00000106066.15"/>
</dbReference>
<dbReference type="Ensembl" id="ENST00000409850.5">
    <property type="protein sequence ID" value="ENSP00000387164.1"/>
    <property type="gene ID" value="ENSG00000106066.15"/>
</dbReference>
<dbReference type="GeneID" id="54504"/>
<dbReference type="KEGG" id="hsa:54504"/>
<dbReference type="MANE-Select" id="ENST00000265394.10">
    <property type="protein sequence ID" value="ENSP00000265394.5"/>
    <property type="RefSeq nucleotide sequence ID" value="NM_031311.5"/>
    <property type="RefSeq protein sequence ID" value="NP_112601.3"/>
</dbReference>
<dbReference type="UCSC" id="uc003szv.4">
    <property type="organism name" value="human"/>
</dbReference>
<dbReference type="AGR" id="HGNC:14399"/>
<dbReference type="CTD" id="54504"/>
<dbReference type="DisGeNET" id="54504"/>
<dbReference type="GeneCards" id="CPVL"/>
<dbReference type="HGNC" id="HGNC:14399">
    <property type="gene designation" value="CPVL"/>
</dbReference>
<dbReference type="HPA" id="ENSG00000106066">
    <property type="expression patterns" value="Tissue enhanced (choroid plexus, lymphoid tissue)"/>
</dbReference>
<dbReference type="MIM" id="609780">
    <property type="type" value="gene"/>
</dbReference>
<dbReference type="neXtProt" id="NX_Q9H3G5"/>
<dbReference type="OpenTargets" id="ENSG00000106066"/>
<dbReference type="PharmGKB" id="PA26850"/>
<dbReference type="VEuPathDB" id="HostDB:ENSG00000106066"/>
<dbReference type="eggNOG" id="KOG1282">
    <property type="taxonomic scope" value="Eukaryota"/>
</dbReference>
<dbReference type="GeneTree" id="ENSGT00940000159498"/>
<dbReference type="HOGENOM" id="CLU_008523_10_1_1"/>
<dbReference type="InParanoid" id="Q9H3G5"/>
<dbReference type="OMA" id="EMADQFV"/>
<dbReference type="OrthoDB" id="443318at2759"/>
<dbReference type="PAN-GO" id="Q9H3G5">
    <property type="GO annotations" value="1 GO annotation based on evolutionary models"/>
</dbReference>
<dbReference type="PhylomeDB" id="Q9H3G5"/>
<dbReference type="TreeFam" id="TF354323"/>
<dbReference type="PathwayCommons" id="Q9H3G5"/>
<dbReference type="SignaLink" id="Q9H3G5"/>
<dbReference type="BioGRID-ORCS" id="54504">
    <property type="hits" value="11 hits in 1151 CRISPR screens"/>
</dbReference>
<dbReference type="CD-CODE" id="232F8A39">
    <property type="entry name" value="P-body"/>
</dbReference>
<dbReference type="CD-CODE" id="DEE660B4">
    <property type="entry name" value="Stress granule"/>
</dbReference>
<dbReference type="ChiTaRS" id="CPVL">
    <property type="organism name" value="human"/>
</dbReference>
<dbReference type="GeneWiki" id="CPVL"/>
<dbReference type="GenomeRNAi" id="54504"/>
<dbReference type="Pharos" id="Q9H3G5">
    <property type="development level" value="Tbio"/>
</dbReference>
<dbReference type="PRO" id="PR:Q9H3G5"/>
<dbReference type="Proteomes" id="UP000005640">
    <property type="component" value="Chromosome 7"/>
</dbReference>
<dbReference type="RNAct" id="Q9H3G5">
    <property type="molecule type" value="protein"/>
</dbReference>
<dbReference type="Bgee" id="ENSG00000106066">
    <property type="expression patterns" value="Expressed in monocyte and 180 other cell types or tissues"/>
</dbReference>
<dbReference type="ExpressionAtlas" id="Q9H3G5">
    <property type="expression patterns" value="baseline and differential"/>
</dbReference>
<dbReference type="GO" id="GO:0070062">
    <property type="term" value="C:extracellular exosome"/>
    <property type="evidence" value="ECO:0007005"/>
    <property type="project" value="UniProtKB"/>
</dbReference>
<dbReference type="GO" id="GO:0004185">
    <property type="term" value="F:serine-type carboxypeptidase activity"/>
    <property type="evidence" value="ECO:0000318"/>
    <property type="project" value="GO_Central"/>
</dbReference>
<dbReference type="GO" id="GO:0006508">
    <property type="term" value="P:proteolysis"/>
    <property type="evidence" value="ECO:0007669"/>
    <property type="project" value="UniProtKB-KW"/>
</dbReference>
<dbReference type="FunFam" id="3.40.50.1820:FF:000096">
    <property type="entry name" value="Carboxypeptidase vitellogenic-like"/>
    <property type="match status" value="1"/>
</dbReference>
<dbReference type="Gene3D" id="3.40.50.1820">
    <property type="entry name" value="alpha/beta hydrolase"/>
    <property type="match status" value="1"/>
</dbReference>
<dbReference type="InterPro" id="IPR029058">
    <property type="entry name" value="AB_hydrolase_fold"/>
</dbReference>
<dbReference type="InterPro" id="IPR001563">
    <property type="entry name" value="Peptidase_S10"/>
</dbReference>
<dbReference type="InterPro" id="IPR018202">
    <property type="entry name" value="Ser_caboxypep_ser_AS"/>
</dbReference>
<dbReference type="PANTHER" id="PTHR11802:SF472">
    <property type="entry name" value="SERINE CARBOXYPEPTIDASE CPVL-RELATED"/>
    <property type="match status" value="1"/>
</dbReference>
<dbReference type="PANTHER" id="PTHR11802">
    <property type="entry name" value="SERINE PROTEASE FAMILY S10 SERINE CARBOXYPEPTIDASE"/>
    <property type="match status" value="1"/>
</dbReference>
<dbReference type="Pfam" id="PF00450">
    <property type="entry name" value="Peptidase_S10"/>
    <property type="match status" value="1"/>
</dbReference>
<dbReference type="PRINTS" id="PR00724">
    <property type="entry name" value="CRBOXYPTASEC"/>
</dbReference>
<dbReference type="SUPFAM" id="SSF53474">
    <property type="entry name" value="alpha/beta-Hydrolases"/>
    <property type="match status" value="1"/>
</dbReference>
<dbReference type="PROSITE" id="PS00131">
    <property type="entry name" value="CARBOXYPEPT_SER_SER"/>
    <property type="match status" value="1"/>
</dbReference>
<feature type="signal peptide" evidence="1">
    <location>
        <begin position="1"/>
        <end position="22"/>
    </location>
</feature>
<feature type="propeptide" id="PRO_0000004280" evidence="1">
    <location>
        <begin position="23"/>
        <end status="unknown"/>
    </location>
</feature>
<feature type="chain" id="PRO_0000004281" description="Probable serine carboxypeptidase CPVL">
    <location>
        <begin status="unknown"/>
        <end position="476"/>
    </location>
</feature>
<feature type="active site" evidence="2">
    <location>
        <position position="204"/>
    </location>
</feature>
<feature type="active site" evidence="2">
    <location>
        <position position="388"/>
    </location>
</feature>
<feature type="active site" evidence="2">
    <location>
        <position position="448"/>
    </location>
</feature>
<feature type="glycosylation site" description="N-linked (GlcNAc...) asparagine" evidence="6">
    <location>
        <position position="81"/>
    </location>
</feature>
<feature type="glycosylation site" description="N-linked (GlcNAc...) asparagine" evidence="6">
    <location>
        <position position="132"/>
    </location>
</feature>
<feature type="glycosylation site" description="N-linked (GlcNAc...) asparagine" evidence="1">
    <location>
        <position position="307"/>
    </location>
</feature>
<feature type="glycosylation site" description="N-linked (GlcNAc...) asparagine" evidence="6">
    <location>
        <position position="346"/>
    </location>
</feature>
<feature type="sequence variant" id="VAR_048681" description="In dbSNP:rs36074676.">
    <original>S</original>
    <variation>L</variation>
    <location>
        <position position="11"/>
    </location>
</feature>
<feature type="sequence variant" id="VAR_048682" description="In dbSNP:rs34219043." evidence="7">
    <original>R</original>
    <variation>H</variation>
    <location>
        <position position="25"/>
    </location>
</feature>
<feature type="sequence variant" id="VAR_048683" description="In dbSNP:rs1052200." evidence="3 7">
    <original>R</original>
    <variation>H</variation>
    <location>
        <position position="398"/>
    </location>
</feature>
<feature type="sequence variant" id="VAR_022612" description="In dbSNP:rs7313." evidence="4 5">
    <original>A</original>
    <variation>V</variation>
    <location>
        <position position="435"/>
    </location>
</feature>
<feature type="sequence conflict" description="In Ref. 1; AAG37991 and 2; AAG14348." evidence="8" ref="1 2">
    <original>F</original>
    <variation>L</variation>
    <location>
        <position position="284"/>
    </location>
</feature>
<feature type="sequence conflict" description="In Ref. 4; BAC11618." evidence="8" ref="4">
    <original>F</original>
    <variation>L</variation>
    <location>
        <position position="287"/>
    </location>
</feature>
<feature type="sequence conflict" description="In Ref. 2; AAG14348." evidence="8" ref="2">
    <original>F</original>
    <variation>L</variation>
    <location>
        <position position="422"/>
    </location>
</feature>
<feature type="sequence conflict" description="In Ref. 2; AAG14348." evidence="8" ref="2">
    <original>F</original>
    <variation>S</variation>
    <location>
        <position position="438"/>
    </location>
</feature>
<gene>
    <name type="primary">CPVL</name>
    <name type="synonym">VLP</name>
    <name type="ORF">PSEC0124</name>
    <name type="ORF">UNQ197/PRO223</name>
</gene>
<proteinExistence type="evidence at protein level"/>